<organism>
    <name type="scientific">Yersinia pseudotuberculosis serotype O:3 (strain YPIII)</name>
    <dbReference type="NCBI Taxonomy" id="502800"/>
    <lineage>
        <taxon>Bacteria</taxon>
        <taxon>Pseudomonadati</taxon>
        <taxon>Pseudomonadota</taxon>
        <taxon>Gammaproteobacteria</taxon>
        <taxon>Enterobacterales</taxon>
        <taxon>Yersiniaceae</taxon>
        <taxon>Yersinia</taxon>
    </lineage>
</organism>
<name>MNMG_YERPY</name>
<comment type="function">
    <text evidence="1">NAD-binding protein involved in the addition of a carboxymethylaminomethyl (cmnm) group at the wobble position (U34) of certain tRNAs, forming tRNA-cmnm(5)s(2)U34.</text>
</comment>
<comment type="cofactor">
    <cofactor evidence="1">
        <name>FAD</name>
        <dbReference type="ChEBI" id="CHEBI:57692"/>
    </cofactor>
</comment>
<comment type="subunit">
    <text evidence="1">Homodimer. Heterotetramer of two MnmE and two MnmG subunits.</text>
</comment>
<comment type="subcellular location">
    <subcellularLocation>
        <location evidence="1">Cytoplasm</location>
    </subcellularLocation>
</comment>
<comment type="similarity">
    <text evidence="1">Belongs to the MnmG family.</text>
</comment>
<sequence>MFYPDQFDVIIIGGGHAGTEAAMAAARMGRQTLLLTHNIDTLGQMSCNPAIGGIGKGHLVKEIDALGGLMAKATDLAGIQFRILNASKGPAVRATRAQADRVLYRLAVRTALENQPNLMIFQQPVEDLIVENDRVVGAVTQMGLKFRAKAVVLTVGTFLDGKIHIGLENYSGGRAGDPPSISLSQRLRELPLRVNRLKTGTPPRIDARTIDFSQLTPQLGDTPIPVFSFLGNAEQHPEQMACHITYTNEKTHEVIRNNLDRSPMYAGIIEGIGPRYCPSIEDKVMRFADRNSHQIFLEPEGLTSNEIYPNGISTSLPFDVQMQIVRSMKGLENARIIRPGYAIEYDFFDPRDLKPTLESKYIQGLFFAGQINGTTGYEEAAAQGLLAGLNAGRFANEEDGWSPRRDEAYLGVLVDDLSTLGTKEPYRMFTSRAEYRLMLREDNADLRLTETGRKLGLVDDIRWAHFSQKVEQIEKERQRLRDIWVHPHSENVSEINALLKAPLSKEANGEELLRRPEIDYRLLTSLTSFGPALTDPQSADQVEIQVKYEGYITRQQEEIEKQLRNENTLLPVDLDYQQVSGLSNEVIAKLNDHKPSSIGQASRISGITPAAISILLVWLKKQGLLRRSA</sequence>
<feature type="chain" id="PRO_0000345360" description="tRNA uridine 5-carboxymethylaminomethyl modification enzyme MnmG">
    <location>
        <begin position="1"/>
        <end position="629"/>
    </location>
</feature>
<feature type="binding site" evidence="1">
    <location>
        <begin position="13"/>
        <end position="18"/>
    </location>
    <ligand>
        <name>FAD</name>
        <dbReference type="ChEBI" id="CHEBI:57692"/>
    </ligand>
</feature>
<feature type="binding site" evidence="1">
    <location>
        <position position="125"/>
    </location>
    <ligand>
        <name>FAD</name>
        <dbReference type="ChEBI" id="CHEBI:57692"/>
    </ligand>
</feature>
<feature type="binding site" evidence="1">
    <location>
        <position position="180"/>
    </location>
    <ligand>
        <name>FAD</name>
        <dbReference type="ChEBI" id="CHEBI:57692"/>
    </ligand>
</feature>
<feature type="binding site" evidence="1">
    <location>
        <begin position="273"/>
        <end position="287"/>
    </location>
    <ligand>
        <name>NAD(+)</name>
        <dbReference type="ChEBI" id="CHEBI:57540"/>
    </ligand>
</feature>
<feature type="binding site" evidence="1">
    <location>
        <position position="370"/>
    </location>
    <ligand>
        <name>FAD</name>
        <dbReference type="ChEBI" id="CHEBI:57692"/>
    </ligand>
</feature>
<reference key="1">
    <citation type="submission" date="2008-02" db="EMBL/GenBank/DDBJ databases">
        <title>Complete sequence of Yersinia pseudotuberculosis YPIII.</title>
        <authorList>
            <consortium name="US DOE Joint Genome Institute"/>
            <person name="Copeland A."/>
            <person name="Lucas S."/>
            <person name="Lapidus A."/>
            <person name="Glavina del Rio T."/>
            <person name="Dalin E."/>
            <person name="Tice H."/>
            <person name="Bruce D."/>
            <person name="Goodwin L."/>
            <person name="Pitluck S."/>
            <person name="Munk A.C."/>
            <person name="Brettin T."/>
            <person name="Detter J.C."/>
            <person name="Han C."/>
            <person name="Tapia R."/>
            <person name="Schmutz J."/>
            <person name="Larimer F."/>
            <person name="Land M."/>
            <person name="Hauser L."/>
            <person name="Challacombe J.F."/>
            <person name="Green L."/>
            <person name="Lindler L.E."/>
            <person name="Nikolich M.P."/>
            <person name="Richardson P."/>
        </authorList>
    </citation>
    <scope>NUCLEOTIDE SEQUENCE [LARGE SCALE GENOMIC DNA]</scope>
    <source>
        <strain>YPIII</strain>
    </source>
</reference>
<dbReference type="EMBL" id="CP000950">
    <property type="protein sequence ID" value="ACA70473.1"/>
    <property type="molecule type" value="Genomic_DNA"/>
</dbReference>
<dbReference type="RefSeq" id="WP_002212259.1">
    <property type="nucleotide sequence ID" value="NZ_CP009792.1"/>
</dbReference>
<dbReference type="SMR" id="B1JR32"/>
<dbReference type="GeneID" id="57974594"/>
<dbReference type="KEGG" id="ypy:YPK_4217"/>
<dbReference type="PATRIC" id="fig|502800.11.peg.567"/>
<dbReference type="GO" id="GO:0005829">
    <property type="term" value="C:cytosol"/>
    <property type="evidence" value="ECO:0007669"/>
    <property type="project" value="TreeGrafter"/>
</dbReference>
<dbReference type="GO" id="GO:0050660">
    <property type="term" value="F:flavin adenine dinucleotide binding"/>
    <property type="evidence" value="ECO:0007669"/>
    <property type="project" value="UniProtKB-UniRule"/>
</dbReference>
<dbReference type="GO" id="GO:0030488">
    <property type="term" value="P:tRNA methylation"/>
    <property type="evidence" value="ECO:0007669"/>
    <property type="project" value="TreeGrafter"/>
</dbReference>
<dbReference type="GO" id="GO:0002098">
    <property type="term" value="P:tRNA wobble uridine modification"/>
    <property type="evidence" value="ECO:0007669"/>
    <property type="project" value="InterPro"/>
</dbReference>
<dbReference type="FunFam" id="1.10.10.1800:FF:000001">
    <property type="entry name" value="tRNA uridine 5-carboxymethylaminomethyl modification enzyme MnmG"/>
    <property type="match status" value="1"/>
</dbReference>
<dbReference type="FunFam" id="1.10.150.570:FF:000001">
    <property type="entry name" value="tRNA uridine 5-carboxymethylaminomethyl modification enzyme MnmG"/>
    <property type="match status" value="1"/>
</dbReference>
<dbReference type="FunFam" id="3.50.50.60:FF:000002">
    <property type="entry name" value="tRNA uridine 5-carboxymethylaminomethyl modification enzyme MnmG"/>
    <property type="match status" value="1"/>
</dbReference>
<dbReference type="FunFam" id="3.50.50.60:FF:000010">
    <property type="entry name" value="tRNA uridine 5-carboxymethylaminomethyl modification enzyme MnmG"/>
    <property type="match status" value="1"/>
</dbReference>
<dbReference type="Gene3D" id="3.50.50.60">
    <property type="entry name" value="FAD/NAD(P)-binding domain"/>
    <property type="match status" value="2"/>
</dbReference>
<dbReference type="Gene3D" id="1.10.150.570">
    <property type="entry name" value="GidA associated domain, C-terminal subdomain"/>
    <property type="match status" value="1"/>
</dbReference>
<dbReference type="Gene3D" id="1.10.10.1800">
    <property type="entry name" value="tRNA uridine 5-carboxymethylaminomethyl modification enzyme MnmG/GidA"/>
    <property type="match status" value="1"/>
</dbReference>
<dbReference type="HAMAP" id="MF_00129">
    <property type="entry name" value="MnmG_GidA"/>
    <property type="match status" value="1"/>
</dbReference>
<dbReference type="InterPro" id="IPR036188">
    <property type="entry name" value="FAD/NAD-bd_sf"/>
</dbReference>
<dbReference type="InterPro" id="IPR049312">
    <property type="entry name" value="GIDA_C_N"/>
</dbReference>
<dbReference type="InterPro" id="IPR004416">
    <property type="entry name" value="MnmG"/>
</dbReference>
<dbReference type="InterPro" id="IPR002218">
    <property type="entry name" value="MnmG-rel"/>
</dbReference>
<dbReference type="InterPro" id="IPR020595">
    <property type="entry name" value="MnmG-rel_CS"/>
</dbReference>
<dbReference type="InterPro" id="IPR026904">
    <property type="entry name" value="MnmG_C"/>
</dbReference>
<dbReference type="InterPro" id="IPR047001">
    <property type="entry name" value="MnmG_C_subdom"/>
</dbReference>
<dbReference type="InterPro" id="IPR044920">
    <property type="entry name" value="MnmG_C_subdom_sf"/>
</dbReference>
<dbReference type="InterPro" id="IPR040131">
    <property type="entry name" value="MnmG_N"/>
</dbReference>
<dbReference type="NCBIfam" id="TIGR00136">
    <property type="entry name" value="mnmG_gidA"/>
    <property type="match status" value="1"/>
</dbReference>
<dbReference type="PANTHER" id="PTHR11806">
    <property type="entry name" value="GLUCOSE INHIBITED DIVISION PROTEIN A"/>
    <property type="match status" value="1"/>
</dbReference>
<dbReference type="PANTHER" id="PTHR11806:SF0">
    <property type="entry name" value="PROTEIN MTO1 HOMOLOG, MITOCHONDRIAL"/>
    <property type="match status" value="1"/>
</dbReference>
<dbReference type="Pfam" id="PF01134">
    <property type="entry name" value="GIDA"/>
    <property type="match status" value="1"/>
</dbReference>
<dbReference type="Pfam" id="PF21680">
    <property type="entry name" value="GIDA_C_1st"/>
    <property type="match status" value="1"/>
</dbReference>
<dbReference type="Pfam" id="PF13932">
    <property type="entry name" value="SAM_GIDA_C"/>
    <property type="match status" value="1"/>
</dbReference>
<dbReference type="SMART" id="SM01228">
    <property type="entry name" value="GIDA_assoc_3"/>
    <property type="match status" value="1"/>
</dbReference>
<dbReference type="SUPFAM" id="SSF51905">
    <property type="entry name" value="FAD/NAD(P)-binding domain"/>
    <property type="match status" value="1"/>
</dbReference>
<dbReference type="PROSITE" id="PS01280">
    <property type="entry name" value="GIDA_1"/>
    <property type="match status" value="1"/>
</dbReference>
<dbReference type="PROSITE" id="PS01281">
    <property type="entry name" value="GIDA_2"/>
    <property type="match status" value="1"/>
</dbReference>
<keyword id="KW-0963">Cytoplasm</keyword>
<keyword id="KW-0274">FAD</keyword>
<keyword id="KW-0285">Flavoprotein</keyword>
<keyword id="KW-0520">NAD</keyword>
<keyword id="KW-0819">tRNA processing</keyword>
<protein>
    <recommendedName>
        <fullName evidence="1">tRNA uridine 5-carboxymethylaminomethyl modification enzyme MnmG</fullName>
    </recommendedName>
    <alternativeName>
        <fullName evidence="1">Glucose-inhibited division protein A</fullName>
    </alternativeName>
</protein>
<proteinExistence type="inferred from homology"/>
<evidence type="ECO:0000255" key="1">
    <source>
        <dbReference type="HAMAP-Rule" id="MF_00129"/>
    </source>
</evidence>
<gene>
    <name evidence="1" type="primary">mnmG</name>
    <name evidence="1" type="synonym">gidA</name>
    <name type="ordered locus">YPK_4217</name>
</gene>
<accession>B1JR32</accession>